<dbReference type="EC" id="2.7.8.7" evidence="1"/>
<dbReference type="EMBL" id="CR936503">
    <property type="protein sequence ID" value="CAI55921.1"/>
    <property type="molecule type" value="Genomic_DNA"/>
</dbReference>
<dbReference type="RefSeq" id="WP_011375307.1">
    <property type="nucleotide sequence ID" value="NC_007576.1"/>
</dbReference>
<dbReference type="SMR" id="Q38V63"/>
<dbReference type="STRING" id="314315.LCA_1614"/>
<dbReference type="GeneID" id="57132537"/>
<dbReference type="KEGG" id="lsa:LCA_1614"/>
<dbReference type="eggNOG" id="COG0736">
    <property type="taxonomic scope" value="Bacteria"/>
</dbReference>
<dbReference type="HOGENOM" id="CLU_089696_1_2_9"/>
<dbReference type="OrthoDB" id="517356at2"/>
<dbReference type="Proteomes" id="UP000002707">
    <property type="component" value="Chromosome"/>
</dbReference>
<dbReference type="GO" id="GO:0005737">
    <property type="term" value="C:cytoplasm"/>
    <property type="evidence" value="ECO:0007669"/>
    <property type="project" value="UniProtKB-SubCell"/>
</dbReference>
<dbReference type="GO" id="GO:0008897">
    <property type="term" value="F:holo-[acyl-carrier-protein] synthase activity"/>
    <property type="evidence" value="ECO:0007669"/>
    <property type="project" value="UniProtKB-UniRule"/>
</dbReference>
<dbReference type="GO" id="GO:0000287">
    <property type="term" value="F:magnesium ion binding"/>
    <property type="evidence" value="ECO:0007669"/>
    <property type="project" value="UniProtKB-UniRule"/>
</dbReference>
<dbReference type="GO" id="GO:0006633">
    <property type="term" value="P:fatty acid biosynthetic process"/>
    <property type="evidence" value="ECO:0007669"/>
    <property type="project" value="UniProtKB-UniRule"/>
</dbReference>
<dbReference type="Gene3D" id="3.90.470.20">
    <property type="entry name" value="4'-phosphopantetheinyl transferase domain"/>
    <property type="match status" value="1"/>
</dbReference>
<dbReference type="HAMAP" id="MF_00101">
    <property type="entry name" value="AcpS"/>
    <property type="match status" value="1"/>
</dbReference>
<dbReference type="InterPro" id="IPR008278">
    <property type="entry name" value="4-PPantetheinyl_Trfase_dom"/>
</dbReference>
<dbReference type="InterPro" id="IPR037143">
    <property type="entry name" value="4-PPantetheinyl_Trfase_dom_sf"/>
</dbReference>
<dbReference type="InterPro" id="IPR002582">
    <property type="entry name" value="ACPS"/>
</dbReference>
<dbReference type="InterPro" id="IPR004568">
    <property type="entry name" value="Ppantetheine-prot_Trfase_dom"/>
</dbReference>
<dbReference type="NCBIfam" id="TIGR00516">
    <property type="entry name" value="acpS"/>
    <property type="match status" value="1"/>
</dbReference>
<dbReference type="NCBIfam" id="TIGR00556">
    <property type="entry name" value="pantethn_trn"/>
    <property type="match status" value="1"/>
</dbReference>
<dbReference type="Pfam" id="PF01648">
    <property type="entry name" value="ACPS"/>
    <property type="match status" value="1"/>
</dbReference>
<dbReference type="SUPFAM" id="SSF56214">
    <property type="entry name" value="4'-phosphopantetheinyl transferase"/>
    <property type="match status" value="1"/>
</dbReference>
<keyword id="KW-0963">Cytoplasm</keyword>
<keyword id="KW-0275">Fatty acid biosynthesis</keyword>
<keyword id="KW-0276">Fatty acid metabolism</keyword>
<keyword id="KW-0444">Lipid biosynthesis</keyword>
<keyword id="KW-0443">Lipid metabolism</keyword>
<keyword id="KW-0460">Magnesium</keyword>
<keyword id="KW-0479">Metal-binding</keyword>
<keyword id="KW-1185">Reference proteome</keyword>
<keyword id="KW-0808">Transferase</keyword>
<gene>
    <name evidence="1" type="primary">acpS</name>
    <name type="ordered locus">LCA_1614</name>
</gene>
<evidence type="ECO:0000255" key="1">
    <source>
        <dbReference type="HAMAP-Rule" id="MF_00101"/>
    </source>
</evidence>
<name>ACPS_LATSS</name>
<reference key="1">
    <citation type="journal article" date="2005" name="Nat. Biotechnol.">
        <title>The complete genome sequence of the meat-borne lactic acid bacterium Lactobacillus sakei 23K.</title>
        <authorList>
            <person name="Chaillou S."/>
            <person name="Champomier-Verges M.-C."/>
            <person name="Cornet M."/>
            <person name="Crutz-Le Coq A.-M."/>
            <person name="Dudez A.-M."/>
            <person name="Martin V."/>
            <person name="Beaufils S."/>
            <person name="Darbon-Rongere E."/>
            <person name="Bossy R."/>
            <person name="Loux V."/>
            <person name="Zagorec M."/>
        </authorList>
    </citation>
    <scope>NUCLEOTIDE SEQUENCE [LARGE SCALE GENOMIC DNA]</scope>
    <source>
        <strain>23K</strain>
    </source>
</reference>
<protein>
    <recommendedName>
        <fullName evidence="1">Holo-[acyl-carrier-protein] synthase</fullName>
        <shortName evidence="1">Holo-ACP synthase</shortName>
        <ecNumber evidence="1">2.7.8.7</ecNumber>
    </recommendedName>
    <alternativeName>
        <fullName evidence="1">4'-phosphopantetheinyl transferase AcpS</fullName>
    </alternativeName>
</protein>
<organism>
    <name type="scientific">Latilactobacillus sakei subsp. sakei (strain 23K)</name>
    <name type="common">Lactobacillus sakei subsp. sakei</name>
    <dbReference type="NCBI Taxonomy" id="314315"/>
    <lineage>
        <taxon>Bacteria</taxon>
        <taxon>Bacillati</taxon>
        <taxon>Bacillota</taxon>
        <taxon>Bacilli</taxon>
        <taxon>Lactobacillales</taxon>
        <taxon>Lactobacillaceae</taxon>
        <taxon>Latilactobacillus</taxon>
    </lineage>
</organism>
<proteinExistence type="inferred from homology"/>
<accession>Q38V63</accession>
<feature type="chain" id="PRO_0000228291" description="Holo-[acyl-carrier-protein] synthase">
    <location>
        <begin position="1"/>
        <end position="117"/>
    </location>
</feature>
<feature type="binding site" evidence="1">
    <location>
        <position position="8"/>
    </location>
    <ligand>
        <name>Mg(2+)</name>
        <dbReference type="ChEBI" id="CHEBI:18420"/>
    </ligand>
</feature>
<feature type="binding site" evidence="1">
    <location>
        <position position="58"/>
    </location>
    <ligand>
        <name>Mg(2+)</name>
        <dbReference type="ChEBI" id="CHEBI:18420"/>
    </ligand>
</feature>
<comment type="function">
    <text evidence="1">Transfers the 4'-phosphopantetheine moiety from coenzyme A to a Ser of acyl-carrier-protein.</text>
</comment>
<comment type="catalytic activity">
    <reaction evidence="1">
        <text>apo-[ACP] + CoA = holo-[ACP] + adenosine 3',5'-bisphosphate + H(+)</text>
        <dbReference type="Rhea" id="RHEA:12068"/>
        <dbReference type="Rhea" id="RHEA-COMP:9685"/>
        <dbReference type="Rhea" id="RHEA-COMP:9690"/>
        <dbReference type="ChEBI" id="CHEBI:15378"/>
        <dbReference type="ChEBI" id="CHEBI:29999"/>
        <dbReference type="ChEBI" id="CHEBI:57287"/>
        <dbReference type="ChEBI" id="CHEBI:58343"/>
        <dbReference type="ChEBI" id="CHEBI:64479"/>
        <dbReference type="EC" id="2.7.8.7"/>
    </reaction>
</comment>
<comment type="cofactor">
    <cofactor evidence="1">
        <name>Mg(2+)</name>
        <dbReference type="ChEBI" id="CHEBI:18420"/>
    </cofactor>
</comment>
<comment type="subcellular location">
    <subcellularLocation>
        <location evidence="1">Cytoplasm</location>
    </subcellularLocation>
</comment>
<comment type="similarity">
    <text evidence="1">Belongs to the P-Pant transferase superfamily. AcpS family.</text>
</comment>
<sequence>MIVGLGIDLAEIDRFEKAQEKNSRFAEKVLTATEFELFSHYTGRRALEFLAGRFAVKEAFSKAYGTGIGQVKLQAVETLNDPQGKPYIKQDLFDGVVHVSLSHTATLVIAEVILERG</sequence>